<gene>
    <name evidence="16 23" type="primary">Tgm2</name>
</gene>
<organism>
    <name type="scientific">Mus musculus</name>
    <name type="common">Mouse</name>
    <dbReference type="NCBI Taxonomy" id="10090"/>
    <lineage>
        <taxon>Eukaryota</taxon>
        <taxon>Metazoa</taxon>
        <taxon>Chordata</taxon>
        <taxon>Craniata</taxon>
        <taxon>Vertebrata</taxon>
        <taxon>Euteleostomi</taxon>
        <taxon>Mammalia</taxon>
        <taxon>Eutheria</taxon>
        <taxon>Euarchontoglires</taxon>
        <taxon>Glires</taxon>
        <taxon>Rodentia</taxon>
        <taxon>Myomorpha</taxon>
        <taxon>Muroidea</taxon>
        <taxon>Muridae</taxon>
        <taxon>Murinae</taxon>
        <taxon>Mus</taxon>
        <taxon>Mus</taxon>
    </lineage>
</organism>
<dbReference type="EC" id="2.3.2.13" evidence="3"/>
<dbReference type="EC" id="3.4.-.-" evidence="3"/>
<dbReference type="EC" id="3.5.1.44" evidence="3"/>
<dbReference type="EC" id="2.3.1.-" evidence="3 2 14"/>
<dbReference type="EMBL" id="M55154">
    <property type="protein sequence ID" value="AAA40420.1"/>
    <property type="molecule type" value="mRNA"/>
</dbReference>
<dbReference type="EMBL" id="AF114266">
    <property type="protein sequence ID" value="AAD37501.1"/>
    <property type="molecule type" value="mRNA"/>
</dbReference>
<dbReference type="EMBL" id="AF076928">
    <property type="protein sequence ID" value="AAC62014.1"/>
    <property type="molecule type" value="mRNA"/>
</dbReference>
<dbReference type="EMBL" id="AK052912">
    <property type="protein sequence ID" value="BAC35200.1"/>
    <property type="molecule type" value="mRNA"/>
</dbReference>
<dbReference type="EMBL" id="AK080224">
    <property type="protein sequence ID" value="BAC37852.1"/>
    <property type="molecule type" value="mRNA"/>
</dbReference>
<dbReference type="EMBL" id="AK080593">
    <property type="protein sequence ID" value="BAC37952.1"/>
    <property type="molecule type" value="mRNA"/>
</dbReference>
<dbReference type="EMBL" id="AK089481">
    <property type="protein sequence ID" value="BAC40899.1"/>
    <property type="molecule type" value="mRNA"/>
</dbReference>
<dbReference type="EMBL" id="AK143712">
    <property type="protein sequence ID" value="BAE25511.1"/>
    <property type="molecule type" value="mRNA"/>
</dbReference>
<dbReference type="EMBL" id="AK151776">
    <property type="protein sequence ID" value="BAE30682.1"/>
    <property type="molecule type" value="mRNA"/>
</dbReference>
<dbReference type="EMBL" id="AK152152">
    <property type="protein sequence ID" value="BAE30987.1"/>
    <property type="molecule type" value="mRNA"/>
</dbReference>
<dbReference type="EMBL" id="AK152627">
    <property type="protein sequence ID" value="BAE31370.1"/>
    <property type="molecule type" value="mRNA"/>
</dbReference>
<dbReference type="EMBL" id="AK159255">
    <property type="protein sequence ID" value="BAE34936.1"/>
    <property type="molecule type" value="mRNA"/>
</dbReference>
<dbReference type="EMBL" id="AK166302">
    <property type="protein sequence ID" value="BAE38690.1"/>
    <property type="molecule type" value="mRNA"/>
</dbReference>
<dbReference type="EMBL" id="AK168990">
    <property type="protein sequence ID" value="BAE40790.1"/>
    <property type="molecule type" value="mRNA"/>
</dbReference>
<dbReference type="EMBL" id="AK169356">
    <property type="protein sequence ID" value="BAE41105.1"/>
    <property type="molecule type" value="mRNA"/>
</dbReference>
<dbReference type="EMBL" id="AL669824">
    <property type="status" value="NOT_ANNOTATED_CDS"/>
    <property type="molecule type" value="Genomic_DNA"/>
</dbReference>
<dbReference type="EMBL" id="BC016492">
    <property type="protein sequence ID" value="AAH16492.1"/>
    <property type="molecule type" value="mRNA"/>
</dbReference>
<dbReference type="EMBL" id="U24148">
    <property type="status" value="NOT_ANNOTATED_CDS"/>
    <property type="molecule type" value="Genomic_DNA"/>
</dbReference>
<dbReference type="CCDS" id="CCDS16985.1"/>
<dbReference type="PIR" id="B39045">
    <property type="entry name" value="B39045"/>
</dbReference>
<dbReference type="RefSeq" id="NP_033399.1">
    <property type="nucleotide sequence ID" value="NM_009373.3"/>
</dbReference>
<dbReference type="SMR" id="P21981"/>
<dbReference type="BioGRID" id="204168">
    <property type="interactions" value="29"/>
</dbReference>
<dbReference type="FunCoup" id="P21981">
    <property type="interactions" value="1234"/>
</dbReference>
<dbReference type="IntAct" id="P21981">
    <property type="interactions" value="4"/>
</dbReference>
<dbReference type="MINT" id="P21981"/>
<dbReference type="STRING" id="10090.ENSMUSP00000099411"/>
<dbReference type="BindingDB" id="P21981"/>
<dbReference type="ChEMBL" id="CHEMBL2079853"/>
<dbReference type="MoonProt" id="P21981"/>
<dbReference type="GlyGen" id="P21981">
    <property type="glycosylation" value="2 sites, 1 O-linked glycan (1 site)"/>
</dbReference>
<dbReference type="iPTMnet" id="P21981"/>
<dbReference type="PhosphoSitePlus" id="P21981"/>
<dbReference type="SwissPalm" id="P21981"/>
<dbReference type="jPOST" id="P21981"/>
<dbReference type="PaxDb" id="10090-ENSMUSP00000099411"/>
<dbReference type="PeptideAtlas" id="P21981"/>
<dbReference type="ProteomicsDB" id="262901"/>
<dbReference type="Pumba" id="P21981"/>
<dbReference type="Antibodypedia" id="3611">
    <property type="antibodies" value="1304 antibodies from 47 providers"/>
</dbReference>
<dbReference type="DNASU" id="21817"/>
<dbReference type="Ensembl" id="ENSMUST00000103122.10">
    <property type="protein sequence ID" value="ENSMUSP00000099411.4"/>
    <property type="gene ID" value="ENSMUSG00000037820.16"/>
</dbReference>
<dbReference type="GeneID" id="21817"/>
<dbReference type="KEGG" id="mmu:21817"/>
<dbReference type="UCSC" id="uc008npr.1">
    <property type="organism name" value="mouse"/>
</dbReference>
<dbReference type="AGR" id="MGI:98731"/>
<dbReference type="CTD" id="7052"/>
<dbReference type="MGI" id="MGI:98731">
    <property type="gene designation" value="Tgm2"/>
</dbReference>
<dbReference type="VEuPathDB" id="HostDB:ENSMUSG00000037820"/>
<dbReference type="eggNOG" id="ENOG502QUSX">
    <property type="taxonomic scope" value="Eukaryota"/>
</dbReference>
<dbReference type="GeneTree" id="ENSGT01050000244866"/>
<dbReference type="HOGENOM" id="CLU_013435_1_0_1"/>
<dbReference type="InParanoid" id="P21981"/>
<dbReference type="OMA" id="CTVGPGE"/>
<dbReference type="OrthoDB" id="437511at2759"/>
<dbReference type="PhylomeDB" id="P21981"/>
<dbReference type="TreeFam" id="TF324278"/>
<dbReference type="BRENDA" id="2.3.2.13">
    <property type="organism ID" value="3474"/>
</dbReference>
<dbReference type="BioGRID-ORCS" id="21817">
    <property type="hits" value="3 hits in 79 CRISPR screens"/>
</dbReference>
<dbReference type="ChiTaRS" id="Tgm2">
    <property type="organism name" value="mouse"/>
</dbReference>
<dbReference type="PRO" id="PR:P21981"/>
<dbReference type="Proteomes" id="UP000000589">
    <property type="component" value="Chromosome 2"/>
</dbReference>
<dbReference type="RNAct" id="P21981">
    <property type="molecule type" value="protein"/>
</dbReference>
<dbReference type="Bgee" id="ENSMUSG00000037820">
    <property type="expression patterns" value="Expressed in conjunctival fornix and 270 other cell types or tissues"/>
</dbReference>
<dbReference type="ExpressionAtlas" id="P21981">
    <property type="expression patterns" value="baseline and differential"/>
</dbReference>
<dbReference type="GO" id="GO:0000785">
    <property type="term" value="C:chromatin"/>
    <property type="evidence" value="ECO:0000250"/>
    <property type="project" value="UniProtKB"/>
</dbReference>
<dbReference type="GO" id="GO:0062023">
    <property type="term" value="C:collagen-containing extracellular matrix"/>
    <property type="evidence" value="ECO:0007005"/>
    <property type="project" value="BHF-UCL"/>
</dbReference>
<dbReference type="GO" id="GO:0005737">
    <property type="term" value="C:cytoplasm"/>
    <property type="evidence" value="ECO:0000247"/>
    <property type="project" value="MGI"/>
</dbReference>
<dbReference type="GO" id="GO:0005829">
    <property type="term" value="C:cytosol"/>
    <property type="evidence" value="ECO:0000250"/>
    <property type="project" value="UniProtKB"/>
</dbReference>
<dbReference type="GO" id="GO:0005783">
    <property type="term" value="C:endoplasmic reticulum"/>
    <property type="evidence" value="ECO:0007669"/>
    <property type="project" value="GOC"/>
</dbReference>
<dbReference type="GO" id="GO:0031012">
    <property type="term" value="C:extracellular matrix"/>
    <property type="evidence" value="ECO:0000304"/>
    <property type="project" value="UniProtKB"/>
</dbReference>
<dbReference type="GO" id="GO:0005576">
    <property type="term" value="C:extracellular region"/>
    <property type="evidence" value="ECO:0007669"/>
    <property type="project" value="UniProtKB-KW"/>
</dbReference>
<dbReference type="GO" id="GO:0016020">
    <property type="term" value="C:membrane"/>
    <property type="evidence" value="ECO:0000304"/>
    <property type="project" value="UniProtKB"/>
</dbReference>
<dbReference type="GO" id="GO:0005739">
    <property type="term" value="C:mitochondrion"/>
    <property type="evidence" value="ECO:0007669"/>
    <property type="project" value="UniProtKB-SubCell"/>
</dbReference>
<dbReference type="GO" id="GO:0000786">
    <property type="term" value="C:nucleosome"/>
    <property type="evidence" value="ECO:0007669"/>
    <property type="project" value="Ensembl"/>
</dbReference>
<dbReference type="GO" id="GO:0005634">
    <property type="term" value="C:nucleus"/>
    <property type="evidence" value="ECO:0000250"/>
    <property type="project" value="UniProtKB"/>
</dbReference>
<dbReference type="GO" id="GO:0005886">
    <property type="term" value="C:plasma membrane"/>
    <property type="evidence" value="ECO:0007669"/>
    <property type="project" value="UniProtKB-SubCell"/>
</dbReference>
<dbReference type="GO" id="GO:0005509">
    <property type="term" value="F:calcium ion binding"/>
    <property type="evidence" value="ECO:0000250"/>
    <property type="project" value="UniProtKB"/>
</dbReference>
<dbReference type="GO" id="GO:0005525">
    <property type="term" value="F:GTP binding"/>
    <property type="evidence" value="ECO:0000250"/>
    <property type="project" value="UniProtKB"/>
</dbReference>
<dbReference type="GO" id="GO:0120297">
    <property type="term" value="F:histone dopaminyltransferase activity"/>
    <property type="evidence" value="ECO:0000250"/>
    <property type="project" value="UniProtKB"/>
</dbReference>
<dbReference type="GO" id="GO:0120295">
    <property type="term" value="F:histone serotonyltransferase activity"/>
    <property type="evidence" value="ECO:0000250"/>
    <property type="project" value="UniProtKB"/>
</dbReference>
<dbReference type="GO" id="GO:0008233">
    <property type="term" value="F:peptidase activity"/>
    <property type="evidence" value="ECO:0007669"/>
    <property type="project" value="UniProtKB-KW"/>
</dbReference>
<dbReference type="GO" id="GO:0120299">
    <property type="term" value="F:peptide histaminyltransferase activity"/>
    <property type="evidence" value="ECO:0000250"/>
    <property type="project" value="UniProtKB"/>
</dbReference>
<dbReference type="GO" id="GO:0120298">
    <property type="term" value="F:peptide noradrenalinyltransferase activity"/>
    <property type="evidence" value="ECO:0007669"/>
    <property type="project" value="RHEA"/>
</dbReference>
<dbReference type="GO" id="GO:0003810">
    <property type="term" value="F:protein-glutamine gamma-glutamyltransferase activity"/>
    <property type="evidence" value="ECO:0000315"/>
    <property type="project" value="UniProtKB"/>
</dbReference>
<dbReference type="GO" id="GO:0050568">
    <property type="term" value="F:protein-glutamine glutaminase activity"/>
    <property type="evidence" value="ECO:0000250"/>
    <property type="project" value="UniProtKB"/>
</dbReference>
<dbReference type="GO" id="GO:0008483">
    <property type="term" value="F:transaminase activity"/>
    <property type="evidence" value="ECO:0000266"/>
    <property type="project" value="MGI"/>
</dbReference>
<dbReference type="GO" id="GO:0043277">
    <property type="term" value="P:apoptotic cell clearance"/>
    <property type="evidence" value="ECO:0007669"/>
    <property type="project" value="Ensembl"/>
</dbReference>
<dbReference type="GO" id="GO:0060348">
    <property type="term" value="P:bone development"/>
    <property type="evidence" value="ECO:0000250"/>
    <property type="project" value="UniProtKB"/>
</dbReference>
<dbReference type="GO" id="GO:0060445">
    <property type="term" value="P:branching involved in salivary gland morphogenesis"/>
    <property type="evidence" value="ECO:0000315"/>
    <property type="project" value="MGI"/>
</dbReference>
<dbReference type="GO" id="GO:0071314">
    <property type="term" value="P:cellular response to cocaine"/>
    <property type="evidence" value="ECO:0007669"/>
    <property type="project" value="Ensembl"/>
</dbReference>
<dbReference type="GO" id="GO:1903351">
    <property type="term" value="P:cellular response to dopamine"/>
    <property type="evidence" value="ECO:0000250"/>
    <property type="project" value="UniProtKB"/>
</dbReference>
<dbReference type="GO" id="GO:1904015">
    <property type="term" value="P:cellular response to serotonin"/>
    <property type="evidence" value="ECO:0000250"/>
    <property type="project" value="UniProtKB"/>
</dbReference>
<dbReference type="GO" id="GO:0014046">
    <property type="term" value="P:dopamine secretion"/>
    <property type="evidence" value="ECO:0007669"/>
    <property type="project" value="Ensembl"/>
</dbReference>
<dbReference type="GO" id="GO:0007186">
    <property type="term" value="P:G protein-coupled receptor signaling pathway"/>
    <property type="evidence" value="ECO:0000304"/>
    <property type="project" value="UniProtKB"/>
</dbReference>
<dbReference type="GO" id="GO:0010467">
    <property type="term" value="P:gene expression"/>
    <property type="evidence" value="ECO:0007669"/>
    <property type="project" value="Ensembl"/>
</dbReference>
<dbReference type="GO" id="GO:0032471">
    <property type="term" value="P:negative regulation of endoplasmic reticulum calcium ion concentration"/>
    <property type="evidence" value="ECO:0000315"/>
    <property type="project" value="UniProtKB"/>
</dbReference>
<dbReference type="GO" id="GO:0018149">
    <property type="term" value="P:peptide cross-linking"/>
    <property type="evidence" value="ECO:0000250"/>
    <property type="project" value="UniProtKB"/>
</dbReference>
<dbReference type="GO" id="GO:0007200">
    <property type="term" value="P:phospholipase C-activating G protein-coupled receptor signaling pathway"/>
    <property type="evidence" value="ECO:0000250"/>
    <property type="project" value="UniProtKB"/>
</dbReference>
<dbReference type="GO" id="GO:0043065">
    <property type="term" value="P:positive regulation of apoptotic process"/>
    <property type="evidence" value="ECO:0000250"/>
    <property type="project" value="UniProtKB"/>
</dbReference>
<dbReference type="GO" id="GO:0045785">
    <property type="term" value="P:positive regulation of cell adhesion"/>
    <property type="evidence" value="ECO:0000315"/>
    <property type="project" value="UniProtKB"/>
</dbReference>
<dbReference type="GO" id="GO:0043547">
    <property type="term" value="P:positive regulation of GTPase activity"/>
    <property type="evidence" value="ECO:0000250"/>
    <property type="project" value="UniProtKB"/>
</dbReference>
<dbReference type="GO" id="GO:0051561">
    <property type="term" value="P:positive regulation of mitochondrial calcium ion concentration"/>
    <property type="evidence" value="ECO:0000315"/>
    <property type="project" value="UniProtKB"/>
</dbReference>
<dbReference type="GO" id="GO:0050769">
    <property type="term" value="P:positive regulation of neurogenesis"/>
    <property type="evidence" value="ECO:0007669"/>
    <property type="project" value="Ensembl"/>
</dbReference>
<dbReference type="GO" id="GO:0051057">
    <property type="term" value="P:positive regulation of small GTPase mediated signal transduction"/>
    <property type="evidence" value="ECO:0000250"/>
    <property type="project" value="UniProtKB"/>
</dbReference>
<dbReference type="GO" id="GO:1903672">
    <property type="term" value="P:positive regulation of sprouting angiogenesis"/>
    <property type="evidence" value="ECO:0007669"/>
    <property type="project" value="Ensembl"/>
</dbReference>
<dbReference type="GO" id="GO:0018277">
    <property type="term" value="P:protein deamination"/>
    <property type="evidence" value="ECO:0000250"/>
    <property type="project" value="UniProtKB"/>
</dbReference>
<dbReference type="GO" id="GO:0051260">
    <property type="term" value="P:protein homooligomerization"/>
    <property type="evidence" value="ECO:0000250"/>
    <property type="project" value="UniProtKB"/>
</dbReference>
<dbReference type="GO" id="GO:0006508">
    <property type="term" value="P:proteolysis"/>
    <property type="evidence" value="ECO:0007669"/>
    <property type="project" value="UniProtKB-KW"/>
</dbReference>
<dbReference type="GO" id="GO:2000425">
    <property type="term" value="P:regulation of apoptotic cell clearance"/>
    <property type="evidence" value="ECO:0000315"/>
    <property type="project" value="UniProtKB"/>
</dbReference>
<dbReference type="GO" id="GO:0042981">
    <property type="term" value="P:regulation of apoptotic process"/>
    <property type="evidence" value="ECO:0000250"/>
    <property type="project" value="UniProtKB"/>
</dbReference>
<dbReference type="GO" id="GO:0060662">
    <property type="term" value="P:salivary gland cavitation"/>
    <property type="evidence" value="ECO:0000315"/>
    <property type="project" value="MGI"/>
</dbReference>
<dbReference type="FunFam" id="2.60.40.10:FF:000090">
    <property type="entry name" value="Protein-glutamine gamma-glutamyltransferase 2"/>
    <property type="match status" value="1"/>
</dbReference>
<dbReference type="FunFam" id="2.60.40.10:FF:000278">
    <property type="entry name" value="Protein-glutamine gamma-glutamyltransferase 2"/>
    <property type="match status" value="1"/>
</dbReference>
<dbReference type="FunFam" id="2.60.40.10:FF:001042">
    <property type="entry name" value="Protein-glutamine gamma-glutamyltransferase 2"/>
    <property type="match status" value="1"/>
</dbReference>
<dbReference type="FunFam" id="3.90.260.10:FF:000001">
    <property type="entry name" value="Protein-glutamine gamma-glutamyltransferase 2"/>
    <property type="match status" value="1"/>
</dbReference>
<dbReference type="Gene3D" id="2.60.40.10">
    <property type="entry name" value="Immunoglobulins"/>
    <property type="match status" value="3"/>
</dbReference>
<dbReference type="Gene3D" id="3.90.260.10">
    <property type="entry name" value="Transglutaminase-like"/>
    <property type="match status" value="1"/>
</dbReference>
<dbReference type="InterPro" id="IPR013783">
    <property type="entry name" value="Ig-like_fold"/>
</dbReference>
<dbReference type="InterPro" id="IPR014756">
    <property type="entry name" value="Ig_E-set"/>
</dbReference>
<dbReference type="InterPro" id="IPR038765">
    <property type="entry name" value="Papain-like_cys_pep_sf"/>
</dbReference>
<dbReference type="InterPro" id="IPR050779">
    <property type="entry name" value="Transglutaminase"/>
</dbReference>
<dbReference type="InterPro" id="IPR002931">
    <property type="entry name" value="Transglutaminase-like"/>
</dbReference>
<dbReference type="InterPro" id="IPR036985">
    <property type="entry name" value="Transglutaminase-like_sf"/>
</dbReference>
<dbReference type="InterPro" id="IPR023608">
    <property type="entry name" value="Transglutaminase_animal"/>
</dbReference>
<dbReference type="InterPro" id="IPR013808">
    <property type="entry name" value="Transglutaminase_AS"/>
</dbReference>
<dbReference type="InterPro" id="IPR008958">
    <property type="entry name" value="Transglutaminase_C"/>
</dbReference>
<dbReference type="InterPro" id="IPR036238">
    <property type="entry name" value="Transglutaminase_C_sf"/>
</dbReference>
<dbReference type="InterPro" id="IPR001102">
    <property type="entry name" value="Transglutaminase_N"/>
</dbReference>
<dbReference type="PANTHER" id="PTHR11590">
    <property type="entry name" value="PROTEIN-GLUTAMINE GAMMA-GLUTAMYLTRANSFERASE"/>
    <property type="match status" value="1"/>
</dbReference>
<dbReference type="PANTHER" id="PTHR11590:SF6">
    <property type="entry name" value="PROTEIN-GLUTAMINE GAMMA-GLUTAMYLTRANSFERASE 2"/>
    <property type="match status" value="1"/>
</dbReference>
<dbReference type="Pfam" id="PF00927">
    <property type="entry name" value="Transglut_C"/>
    <property type="match status" value="2"/>
</dbReference>
<dbReference type="Pfam" id="PF01841">
    <property type="entry name" value="Transglut_core"/>
    <property type="match status" value="1"/>
</dbReference>
<dbReference type="Pfam" id="PF00868">
    <property type="entry name" value="Transglut_N"/>
    <property type="match status" value="1"/>
</dbReference>
<dbReference type="PIRSF" id="PIRSF000459">
    <property type="entry name" value="TGM_EBP42"/>
    <property type="match status" value="1"/>
</dbReference>
<dbReference type="SMART" id="SM00460">
    <property type="entry name" value="TGc"/>
    <property type="match status" value="1"/>
</dbReference>
<dbReference type="SUPFAM" id="SSF54001">
    <property type="entry name" value="Cysteine proteinases"/>
    <property type="match status" value="1"/>
</dbReference>
<dbReference type="SUPFAM" id="SSF81296">
    <property type="entry name" value="E set domains"/>
    <property type="match status" value="1"/>
</dbReference>
<dbReference type="SUPFAM" id="SSF49309">
    <property type="entry name" value="Transglutaminase, two C-terminal domains"/>
    <property type="match status" value="2"/>
</dbReference>
<dbReference type="PROSITE" id="PS00547">
    <property type="entry name" value="TRANSGLUTAMINASES"/>
    <property type="match status" value="1"/>
</dbReference>
<comment type="function">
    <text evidence="2 3 7 8 10 11 13 14">Calcium-dependent acyltransferase that catalyzes the formation of covalent bonds between peptide-bound glutamine and various primary amines, such as gamma-amino group of peptide-bound lysine, or mono- and polyamines, thereby producing cross-linked or aminated proteins, respectively (By similarity). Involved in many biological processes, such as bone development, angiogenesis, wound healing, cellular differentiation, chromatin modification and apoptosis (By similarity). Acts as a protein-glutamine gamma-glutamyltransferase by mediating the cross-linking of proteins, such as ACO2, HSPB6, FN1, HMGB1, RAP1GDS1, SLC25A4/ANT1, SPP1 and WDR54 (PubMed:11113189, PubMed:11274171, PubMed:20489165). Under physiological conditions, the protein cross-linking activity is inhibited by GTP; inhibition is relieved by Ca(2+) in response to various stresses (By similarity). When secreted, catalyzes cross-linking of proteins of the extracellular matrix, such as FN1 and SPP1 resulting in the formation of scaffolds (By similarity). Plays a key role during apoptosis, both by (1) promoting the cross-linking of cytoskeletal proteins resulting in condensation of the cytoplasm, and by (2) mediating cross-linking proteins of the extracellular matrix, resulting in the irreversible formation of scaffolds that stabilize the integrity of the dying cells before their clearance by phagocytosis, thereby preventing the leakage of harmful intracellular components (PubMed:12810961, PubMed:15905580). In addition to protein cross-linking, can use different monoamine substrates to catalyze a vast array of protein post-translational modifications: mediates aminylation of serotonin, dopamine, noradrenaline or histamine into glutamine residues of target proteins to generate protein serotonylation, dopaminylation, noradrenalinylation or histaminylation, respectively (PubMed:32116663). Mediates protein serotonylation of small GTPases during activation and aggregation of platelets, leading to constitutive activation of these GTPases (By similarity). Plays a key role in chromatin organization by mediating serotonylation and dopaminylation of histone H3 (By similarity). Catalyzes serotonylation of 'Gln-5' of histone H3 (H3Q5ser) during serotonergic neuron differentiation, thereby facilitating transcription (By similarity). Acts as a mediator of neurotransmission-independent role of nuclear dopamine in ventral tegmental area (VTA) neurons: catalyzes dopaminylation of 'Gln-5' of histone H3 (H3Q5dop), thereby regulating relapse-related transcriptional plasticity in the reward system (By similarity). Regulates vein remodeling by mediating serotonylation and subsequent inactivation of ATP2A2/SERCA2 (PubMed:32116663). Also acts as a protein deamidase by mediating the side chain deamidation of specific glutamine residues of proteins to glutamate (By similarity). Catalyzes specific deamidation of protein gliadin, a component of wheat gluten in the diet (By similarity). May also act as an isopeptidase cleaving the previously formed cross-links (By similarity). Also able to participate in signaling pathways independently of its acyltransferase activity: acts as a signal transducer in alpha-1 adrenergic receptor-mediated stimulation of phospholipase C-delta (PLCD) activity and is required for coupling alpha-1 adrenergic agonists to the stimulation of phosphoinositide lipid metabolism (PubMed:11274171).</text>
</comment>
<comment type="catalytic activity">
    <reaction evidence="3 6">
        <text>L-glutaminyl-[protein] + L-lysyl-[protein] = [protein]-L-lysyl-N(6)-5-L-glutamyl-[protein] + NH4(+)</text>
        <dbReference type="Rhea" id="RHEA:54816"/>
        <dbReference type="Rhea" id="RHEA-COMP:9752"/>
        <dbReference type="Rhea" id="RHEA-COMP:10207"/>
        <dbReference type="Rhea" id="RHEA-COMP:14005"/>
        <dbReference type="ChEBI" id="CHEBI:28938"/>
        <dbReference type="ChEBI" id="CHEBI:29969"/>
        <dbReference type="ChEBI" id="CHEBI:30011"/>
        <dbReference type="ChEBI" id="CHEBI:138370"/>
        <dbReference type="EC" id="2.3.2.13"/>
    </reaction>
    <physiologicalReaction direction="left-to-right" evidence="3">
        <dbReference type="Rhea" id="RHEA:54817"/>
    </physiologicalReaction>
</comment>
<comment type="catalytic activity">
    <reaction evidence="14">
        <text>L-glutaminyl-[protein] + serotonin = 5-serotonyl-L-glutamyl-[protein] + NH4(+)</text>
        <dbReference type="Rhea" id="RHEA:66552"/>
        <dbReference type="Rhea" id="RHEA-COMP:10207"/>
        <dbReference type="Rhea" id="RHEA-COMP:17052"/>
        <dbReference type="ChEBI" id="CHEBI:28938"/>
        <dbReference type="ChEBI" id="CHEBI:30011"/>
        <dbReference type="ChEBI" id="CHEBI:167174"/>
        <dbReference type="ChEBI" id="CHEBI:350546"/>
    </reaction>
    <physiologicalReaction direction="left-to-right" evidence="14">
        <dbReference type="Rhea" id="RHEA:66553"/>
    </physiologicalReaction>
</comment>
<comment type="catalytic activity">
    <reaction evidence="3">
        <text>L-glutaminyl-[protein] + dopamine = 5-dopaminyl-L-glutamyl-[protein] + NH4(+)</text>
        <dbReference type="Rhea" id="RHEA:66556"/>
        <dbReference type="Rhea" id="RHEA-COMP:10207"/>
        <dbReference type="Rhea" id="RHEA-COMP:17053"/>
        <dbReference type="ChEBI" id="CHEBI:28938"/>
        <dbReference type="ChEBI" id="CHEBI:30011"/>
        <dbReference type="ChEBI" id="CHEBI:59905"/>
        <dbReference type="ChEBI" id="CHEBI:167175"/>
    </reaction>
    <physiologicalReaction direction="left-to-right" evidence="3">
        <dbReference type="Rhea" id="RHEA:66557"/>
    </physiologicalReaction>
</comment>
<comment type="catalytic activity">
    <reaction evidence="3">
        <text>L-glutaminyl-[protein] + histamine = 5-histaminyl-L-glutamyl-[protein] + NH4(+)</text>
        <dbReference type="Rhea" id="RHEA:66564"/>
        <dbReference type="Rhea" id="RHEA-COMP:10207"/>
        <dbReference type="Rhea" id="RHEA-COMP:17056"/>
        <dbReference type="ChEBI" id="CHEBI:28938"/>
        <dbReference type="ChEBI" id="CHEBI:30011"/>
        <dbReference type="ChEBI" id="CHEBI:58432"/>
        <dbReference type="ChEBI" id="CHEBI:167179"/>
    </reaction>
    <physiologicalReaction direction="left-to-right" evidence="3">
        <dbReference type="Rhea" id="RHEA:66565"/>
    </physiologicalReaction>
</comment>
<comment type="catalytic activity">
    <reaction evidence="2">
        <text>L-glutaminyl-[protein] + (R)-noradrenaline = 5-(R)-noradrenalinyl-L-glutamyl-[protein] + NH4(+)</text>
        <dbReference type="Rhea" id="RHEA:66560"/>
        <dbReference type="Rhea" id="RHEA-COMP:10207"/>
        <dbReference type="Rhea" id="RHEA-COMP:17054"/>
        <dbReference type="ChEBI" id="CHEBI:28938"/>
        <dbReference type="ChEBI" id="CHEBI:30011"/>
        <dbReference type="ChEBI" id="CHEBI:72587"/>
        <dbReference type="ChEBI" id="CHEBI:167178"/>
    </reaction>
    <physiologicalReaction direction="left-to-right" evidence="2">
        <dbReference type="Rhea" id="RHEA:66561"/>
    </physiologicalReaction>
</comment>
<comment type="catalytic activity">
    <reaction evidence="3">
        <text>L-glutaminyl-[protein] + H2O = L-glutamyl-[protein] + NH4(+)</text>
        <dbReference type="Rhea" id="RHEA:16441"/>
        <dbReference type="Rhea" id="RHEA-COMP:10207"/>
        <dbReference type="Rhea" id="RHEA-COMP:10208"/>
        <dbReference type="ChEBI" id="CHEBI:15377"/>
        <dbReference type="ChEBI" id="CHEBI:28938"/>
        <dbReference type="ChEBI" id="CHEBI:29973"/>
        <dbReference type="ChEBI" id="CHEBI:30011"/>
        <dbReference type="EC" id="3.5.1.44"/>
    </reaction>
    <physiologicalReaction direction="left-to-right" evidence="3">
        <dbReference type="Rhea" id="RHEA:16442"/>
    </physiologicalReaction>
</comment>
<comment type="cofactor">
    <cofactor evidence="3">
        <name>Ca(2+)</name>
        <dbReference type="ChEBI" id="CHEBI:29108"/>
    </cofactor>
</comment>
<comment type="activity regulation">
    <text evidence="3">Acyltransferase activity is regulated by the binding of GTP and Ca(2+): inactivated by GTP, which stabilizes its closed structure, thereby obstructing the accessibility of substrates to the active sites. In contrast, Ca(2+) acts as a cofactor by inducing conformational change to the active open form. In absence of Ca(2+), Mg(2+) may bind Ca(2+)-binding sites, promoting GTP-binding and subsequent inhibition of the acyltransferase activity. Extracellularly reduced and activated by CLIC3.</text>
</comment>
<comment type="subunit">
    <text evidence="3 5">Monomer. Interacts with phospholipase C; promoting alpha-1 adrenergic receptor signaling (By similarity). Interacts with PLCD1 (By similarity).</text>
</comment>
<comment type="subcellular location">
    <subcellularLocation>
        <location evidence="12">Cytoplasm</location>
        <location evidence="12">Cytosol</location>
    </subcellularLocation>
    <subcellularLocation>
        <location evidence="3">Nucleus</location>
    </subcellularLocation>
    <subcellularLocation>
        <location evidence="3">Chromosome</location>
    </subcellularLocation>
    <subcellularLocation>
        <location evidence="13">Secreted</location>
        <location evidence="13">Extracellular space</location>
        <location evidence="13">Extracellular matrix</location>
    </subcellularLocation>
    <subcellularLocation>
        <location evidence="5">Cell membrane</location>
    </subcellularLocation>
    <subcellularLocation>
        <location evidence="12">Mitochondrion</location>
    </subcellularLocation>
    <text evidence="3">Mainly localizes to the cytosol. Present at much lower level in the nucleus and chromatin. Also secreted via a non-classical secretion pathway to the extracellular matrix.</text>
</comment>
<comment type="PTM">
    <text evidence="3">Disulfide bond formation inactivates the calcium-dependent acyltransferase activity. Cys-370 can form disulfide bonds with both Cys-230 and Cys-371: formation of a disulfide bond between Cys-230 and Cys-370 facilitates formation of the disulfide between Cys-370 and Cys-371, which promotes inactivation of the acyltransferase activity. May also form interchain disulfids between Cys-230 and Cys-370. Ca(2+) protects against disulfide bond formation and inactivation.</text>
</comment>
<comment type="PTM">
    <text evidence="2">Auto-transglutaminated: Forms covalent cross-links mediated by transglutaminase between Gln-632 and the epsilon-amino group of a lysine residue of itself or HMGB1, forming homopolymers and heteropolymers, respectively.</text>
</comment>
<comment type="PTM">
    <text evidence="13">S-nitrosylated, leading to inactivation of the acyltransferase activity.</text>
</comment>
<comment type="disruption phenotype">
    <text evidence="7 8 9 10 11">No visible phenotype in normal conditions (PubMed:11113189, PubMed:11274171). During apoptosis, mice display defective clearance of apoptotic cells in the thymus (PubMed:12810961). Moreover, inflammatory as well as autoimmune reactions develop spontaneously with age (PubMed:12810961). Defective clearance of apoptotic cells is caused by an impaired capacity of macrophages to engulf, but not to bind, apoptotic cells (PubMed:15905580). Mice also show glucose intolerance after intraperitoneal glucose loading: mice manifest a tendency to develop hypoglycemia after administration of exogenous insulin as a consequence of enhanced IRS2 phosphorylation (PubMed:12205028).</text>
</comment>
<comment type="similarity">
    <text evidence="22">Belongs to the transglutaminase superfamily. Transglutaminase family.</text>
</comment>
<protein>
    <recommendedName>
        <fullName evidence="22">Protein-glutamine gamma-glutamyltransferase 2</fullName>
        <ecNumber evidence="3">2.3.2.13</ecNumber>
    </recommendedName>
    <alternativeName>
        <fullName evidence="22">Isopeptidase TGM2</fullName>
        <ecNumber evidence="3">3.4.-.-</ecNumber>
    </alternativeName>
    <alternativeName>
        <fullName evidence="22">Protein-glutamine deamidase TGM2</fullName>
        <ecNumber evidence="3">3.5.1.44</ecNumber>
    </alternativeName>
    <alternativeName>
        <fullName evidence="22">Protein-glutamine dopaminyltransferase TGM2</fullName>
        <ecNumber evidence="3">2.3.1.-</ecNumber>
    </alternativeName>
    <alternativeName>
        <fullName evidence="22">Protein-glutamine histaminyltransferase TGM2</fullName>
        <ecNumber evidence="3">2.3.1.-</ecNumber>
    </alternativeName>
    <alternativeName>
        <fullName evidence="22">Protein-glutamine noradrenalinyltransferase TGM2</fullName>
        <ecNumber evidence="2">2.3.1.-</ecNumber>
    </alternativeName>
    <alternativeName>
        <fullName evidence="22">Protein-glutamine serotonyltransferase TGM2</fullName>
        <ecNumber evidence="14">2.3.1.-</ecNumber>
    </alternativeName>
    <alternativeName>
        <fullName evidence="20">Tissue transglutaminase</fullName>
        <shortName evidence="3">tTG</shortName>
    </alternativeName>
    <alternativeName>
        <fullName evidence="18">Transglutaminase II</fullName>
        <shortName evidence="18">TGase II</shortName>
    </alternativeName>
    <alternativeName>
        <fullName evidence="17">Transglutaminase-2</fullName>
        <shortName evidence="21">TG2</shortName>
        <shortName evidence="17">TGase-2</shortName>
        <shortName evidence="17 19">TGase2</shortName>
    </alternativeName>
</protein>
<feature type="initiator methionine" description="Removed" evidence="15">
    <location>
        <position position="1"/>
    </location>
</feature>
<feature type="chain" id="PRO_0000213708" description="Protein-glutamine gamma-glutamyltransferase 2">
    <location>
        <begin position="2"/>
        <end position="686"/>
    </location>
</feature>
<feature type="active site" evidence="6">
    <location>
        <position position="277"/>
    </location>
</feature>
<feature type="active site" evidence="6">
    <location>
        <position position="335"/>
    </location>
</feature>
<feature type="active site" evidence="6">
    <location>
        <position position="358"/>
    </location>
</feature>
<feature type="binding site" evidence="1">
    <location>
        <position position="398"/>
    </location>
    <ligand>
        <name>Ca(2+)</name>
        <dbReference type="ChEBI" id="CHEBI:29108"/>
    </ligand>
</feature>
<feature type="binding site" evidence="1">
    <location>
        <position position="400"/>
    </location>
    <ligand>
        <name>Ca(2+)</name>
        <dbReference type="ChEBI" id="CHEBI:29108"/>
    </ligand>
</feature>
<feature type="binding site" evidence="3">
    <location>
        <position position="437"/>
    </location>
    <ligand>
        <name>Ca(2+)</name>
        <dbReference type="ChEBI" id="CHEBI:29108"/>
    </ligand>
</feature>
<feature type="binding site" evidence="1">
    <location>
        <position position="447"/>
    </location>
    <ligand>
        <name>Ca(2+)</name>
        <dbReference type="ChEBI" id="CHEBI:29108"/>
    </ligand>
</feature>
<feature type="binding site" evidence="1">
    <location>
        <position position="452"/>
    </location>
    <ligand>
        <name>Ca(2+)</name>
        <dbReference type="ChEBI" id="CHEBI:29108"/>
    </ligand>
</feature>
<feature type="binding site" evidence="3">
    <location>
        <begin position="476"/>
        <end position="483"/>
    </location>
    <ligand>
        <name>GTP</name>
        <dbReference type="ChEBI" id="CHEBI:37565"/>
    </ligand>
</feature>
<feature type="binding site" evidence="3">
    <location>
        <position position="538"/>
    </location>
    <ligand>
        <name>Ca(2+)</name>
        <dbReference type="ChEBI" id="CHEBI:29108"/>
    </ligand>
</feature>
<feature type="binding site" evidence="3">
    <location>
        <begin position="579"/>
        <end position="582"/>
    </location>
    <ligand>
        <name>GTP</name>
        <dbReference type="ChEBI" id="CHEBI:37565"/>
    </ligand>
</feature>
<feature type="site" description="Important for catalytic activity" evidence="4">
    <location>
        <position position="516"/>
    </location>
</feature>
<feature type="modified residue" description="N-acetylalanine" evidence="15">
    <location>
        <position position="2"/>
    </location>
</feature>
<feature type="modified residue" description="N6-acetyllysine" evidence="24">
    <location>
        <position position="468"/>
    </location>
</feature>
<feature type="disulfide bond" description="Alternate" evidence="3">
    <location>
        <begin position="230"/>
        <end position="370"/>
    </location>
</feature>
<feature type="disulfide bond" description="Alternate" evidence="3">
    <location>
        <begin position="370"/>
        <end position="371"/>
    </location>
</feature>
<feature type="cross-link" description="Isoglutamyl lysine isopeptide (Gln-Lys) (interchain with K-?)" evidence="2">
    <location>
        <position position="632"/>
    </location>
</feature>
<feature type="sequence conflict" description="In Ref. 1; AAA40420." evidence="22" ref="1">
    <original>VL</original>
    <variation>LV</variation>
    <location>
        <begin position="32"/>
        <end position="33"/>
    </location>
</feature>
<feature type="sequence conflict" description="In Ref. 1; AAA40420 and 2; AAD37501." evidence="22" ref="1 2">
    <original>E</original>
    <variation>Q</variation>
    <location>
        <position position="51"/>
    </location>
</feature>
<feature type="sequence conflict" description="In Ref. 1; AAA40420." evidence="22" ref="1">
    <original>E</original>
    <variation>Q</variation>
    <location>
        <position position="186"/>
    </location>
</feature>
<feature type="sequence conflict" description="In Ref. 1; AAA40420." evidence="22" ref="1">
    <original>A</original>
    <variation>D</variation>
    <location>
        <position position="226"/>
    </location>
</feature>
<feature type="sequence conflict" description="In Ref. 1; AAA40420." evidence="22" ref="1">
    <original>S</original>
    <variation>T</variation>
    <location>
        <position position="325"/>
    </location>
</feature>
<feature type="sequence conflict" description="In Ref. 1; AAA40420 and 2; AAD37501." evidence="22" ref="1 2">
    <original>I</original>
    <variation>L</variation>
    <location>
        <position position="357"/>
    </location>
</feature>
<feature type="sequence conflict" description="In Ref. 4; BAC40899." evidence="22" ref="4">
    <original>E</original>
    <variation>K</variation>
    <location>
        <position position="396"/>
    </location>
</feature>
<feature type="sequence conflict" description="In Ref. 1; AAA40420." evidence="22" ref="1">
    <original>ED</original>
    <variation>DE</variation>
    <location>
        <begin position="408"/>
        <end position="409"/>
    </location>
</feature>
<feature type="sequence conflict" description="In Ref. 1; AAA40420." evidence="22" ref="1">
    <original>SI</original>
    <variation>WM</variation>
    <location>
        <begin position="415"/>
        <end position="416"/>
    </location>
</feature>
<feature type="sequence conflict" description="In Ref. 1; AAA40420." evidence="22" ref="1">
    <original>V</original>
    <variation>I</variation>
    <location>
        <position position="421"/>
    </location>
</feature>
<feature type="sequence conflict" description="In Ref. 1; AAA40420." evidence="22" ref="1">
    <original>DSMSM</original>
    <variation>QYEH</variation>
    <location>
        <begin position="481"/>
        <end position="485"/>
    </location>
</feature>
<feature type="sequence conflict" description="In Ref. 4; BAE38690." evidence="22" ref="4">
    <original>N</original>
    <variation>K</variation>
    <location>
        <position position="539"/>
    </location>
</feature>
<feature type="sequence conflict" description="In Ref. 1; AAA40420." evidence="22" ref="1">
    <original>G</original>
    <variation>D</variation>
    <location>
        <position position="552"/>
    </location>
</feature>
<feature type="sequence conflict" description="In Ref. 1; AAA40420 and 2; AAD37501." evidence="22" ref="1 2">
    <original>L</original>
    <variation>V</variation>
    <location>
        <position position="583"/>
    </location>
</feature>
<feature type="sequence conflict" description="In Ref. 1; AAA40420." evidence="22" ref="1">
    <original>F</original>
    <variation>S</variation>
    <location>
        <position position="654"/>
    </location>
</feature>
<accession>P21981</accession>
<accession>O88901</accession>
<accession>Q3TLV2</accession>
<accession>Q8C217</accession>
<accession>Q91VG9</accession>
<accession>Q9R1F7</accession>
<name>TGM2_MOUSE</name>
<sequence length="686" mass="77061">MAEELLLERCDLEIQANGRDHHTADLCQEKLVLRRGQRFRLTLYFEGRGYEASVDSLTFGAVTGPDPSEEAGTKARFSLSDNVEEGSWSASVLDQQDNVLSLQLCTPANAPIGLYRLSLEASTGYQGSSFVLGHFILLYNAWCPADDVYLDSEEERREYVLTQQGFIYQGSVKFIKSVPWNFGQFEDGILDTCLMLLDMNPKFLKNRSRDCSRRSSPIYVGRVVSAMVNCNDDQGVLLGRWDNNYGDGISPMAWIGSVDILRRWKEHGCQQVKYGQCWVFAAVACTVLRCLGIPTRVVTNYNSAHDQNSNLLIEYFRNEFGELESNKSEMIWNFHCWVESWMTRPDLQPGYEGWQAIDPTPQEKSEGTYCCGPVSVRAIKEGDLSTKYDAPFVFAEVNADVVDWIRQEDGSVLKSINRSLVVGQKISTKSVGRDDREDITHTYKYPEGSPEEREVFTKANHLNKLAEKEETGVAMRIRVGDSMSMGNDFDVFAHIGNDTSETRECRLLLCARTVSYNGVLGPECGTEDINLTLDPYSENSIPLRILYEKYSGCLTESNLIKVRGLLIEPAANSYLLAERDLYLENPEIKIRVLGEPKQNRKLVAEVSLKNPLSDPLYDCIFTVEGAGLTKEQKSVEVSDPVPAGDLVKARVDLFPTDIGLHKLVVNFQCDKLKSVKGYRNVIIGPA</sequence>
<evidence type="ECO:0000250" key="1">
    <source>
        <dbReference type="UniProtKB" id="P00488"/>
    </source>
</evidence>
<evidence type="ECO:0000250" key="2">
    <source>
        <dbReference type="UniProtKB" id="P08587"/>
    </source>
</evidence>
<evidence type="ECO:0000250" key="3">
    <source>
        <dbReference type="UniProtKB" id="P21980"/>
    </source>
</evidence>
<evidence type="ECO:0000250" key="4">
    <source>
        <dbReference type="UniProtKB" id="P52181"/>
    </source>
</evidence>
<evidence type="ECO:0000250" key="5">
    <source>
        <dbReference type="UniProtKB" id="Q9WVJ6"/>
    </source>
</evidence>
<evidence type="ECO:0000255" key="6">
    <source>
        <dbReference type="PROSITE-ProRule" id="PRU10024"/>
    </source>
</evidence>
<evidence type="ECO:0000269" key="7">
    <source>
    </source>
</evidence>
<evidence type="ECO:0000269" key="8">
    <source>
    </source>
</evidence>
<evidence type="ECO:0000269" key="9">
    <source>
    </source>
</evidence>
<evidence type="ECO:0000269" key="10">
    <source>
    </source>
</evidence>
<evidence type="ECO:0000269" key="11">
    <source>
    </source>
</evidence>
<evidence type="ECO:0000269" key="12">
    <source>
    </source>
</evidence>
<evidence type="ECO:0000269" key="13">
    <source>
    </source>
</evidence>
<evidence type="ECO:0000269" key="14">
    <source>
    </source>
</evidence>
<evidence type="ECO:0000269" key="15">
    <source ref="8"/>
</evidence>
<evidence type="ECO:0000303" key="16">
    <source>
    </source>
</evidence>
<evidence type="ECO:0000303" key="17">
    <source>
    </source>
</evidence>
<evidence type="ECO:0000303" key="18">
    <source>
    </source>
</evidence>
<evidence type="ECO:0000303" key="19">
    <source>
    </source>
</evidence>
<evidence type="ECO:0000303" key="20">
    <source>
    </source>
</evidence>
<evidence type="ECO:0000303" key="21">
    <source>
    </source>
</evidence>
<evidence type="ECO:0000305" key="22"/>
<evidence type="ECO:0000312" key="23">
    <source>
        <dbReference type="MGI" id="MGI:98731"/>
    </source>
</evidence>
<evidence type="ECO:0007744" key="24">
    <source>
    </source>
</evidence>
<reference key="1">
    <citation type="journal article" date="1991" name="J. Biol. Chem.">
        <title>Isolation and characterization of cDNA clones to mouse macrophage and human endothelial cell tissue transglutaminases.</title>
        <authorList>
            <person name="Gentile V."/>
            <person name="Saydak M."/>
            <person name="Chiocca E.A."/>
            <person name="Akande O."/>
            <person name="Birckbichler P.J."/>
            <person name="Lee K.N."/>
            <person name="Stein J.P."/>
            <person name="Davies P.J.A."/>
        </authorList>
    </citation>
    <scope>NUCLEOTIDE SEQUENCE [MRNA]</scope>
    <source>
        <tissue>Macrophage</tissue>
    </source>
</reference>
<reference key="2">
    <citation type="journal article" date="1999" name="Arch. Biochem. Biophys.">
        <title>Organization and chromosomal mapping of mouse Gh/tissue transglutaminase gene (Tgm2).</title>
        <authorList>
            <person name="Nanda N."/>
            <person name="Iismaa S.E."/>
            <person name="Copeland N.G."/>
            <person name="Gilbert D.J."/>
            <person name="Jenkins N."/>
            <person name="Graham R.M."/>
            <person name="Sutrave P."/>
        </authorList>
    </citation>
    <scope>NUCLEOTIDE SEQUENCE [MRNA]</scope>
    <source>
        <strain>129/SvJ</strain>
    </source>
</reference>
<reference key="3">
    <citation type="journal article" date="1999" name="Cell Death Differ.">
        <title>Mapping and sequencing of the murine 'tissue' transglutaminase (Tgm2) gene: absence of mutations in MRLlpr/lpr mice.</title>
        <authorList>
            <person name="D'Amato M."/>
            <person name="Iannicola C."/>
            <person name="Monteriu G."/>
            <person name="Piacentini M."/>
        </authorList>
    </citation>
    <scope>NUCLEOTIDE SEQUENCE [MRNA]</scope>
</reference>
<reference key="4">
    <citation type="journal article" date="2005" name="Science">
        <title>The transcriptional landscape of the mammalian genome.</title>
        <authorList>
            <person name="Carninci P."/>
            <person name="Kasukawa T."/>
            <person name="Katayama S."/>
            <person name="Gough J."/>
            <person name="Frith M.C."/>
            <person name="Maeda N."/>
            <person name="Oyama R."/>
            <person name="Ravasi T."/>
            <person name="Lenhard B."/>
            <person name="Wells C."/>
            <person name="Kodzius R."/>
            <person name="Shimokawa K."/>
            <person name="Bajic V.B."/>
            <person name="Brenner S.E."/>
            <person name="Batalov S."/>
            <person name="Forrest A.R."/>
            <person name="Zavolan M."/>
            <person name="Davis M.J."/>
            <person name="Wilming L.G."/>
            <person name="Aidinis V."/>
            <person name="Allen J.E."/>
            <person name="Ambesi-Impiombato A."/>
            <person name="Apweiler R."/>
            <person name="Aturaliya R.N."/>
            <person name="Bailey T.L."/>
            <person name="Bansal M."/>
            <person name="Baxter L."/>
            <person name="Beisel K.W."/>
            <person name="Bersano T."/>
            <person name="Bono H."/>
            <person name="Chalk A.M."/>
            <person name="Chiu K.P."/>
            <person name="Choudhary V."/>
            <person name="Christoffels A."/>
            <person name="Clutterbuck D.R."/>
            <person name="Crowe M.L."/>
            <person name="Dalla E."/>
            <person name="Dalrymple B.P."/>
            <person name="de Bono B."/>
            <person name="Della Gatta G."/>
            <person name="di Bernardo D."/>
            <person name="Down T."/>
            <person name="Engstrom P."/>
            <person name="Fagiolini M."/>
            <person name="Faulkner G."/>
            <person name="Fletcher C.F."/>
            <person name="Fukushima T."/>
            <person name="Furuno M."/>
            <person name="Futaki S."/>
            <person name="Gariboldi M."/>
            <person name="Georgii-Hemming P."/>
            <person name="Gingeras T.R."/>
            <person name="Gojobori T."/>
            <person name="Green R.E."/>
            <person name="Gustincich S."/>
            <person name="Harbers M."/>
            <person name="Hayashi Y."/>
            <person name="Hensch T.K."/>
            <person name="Hirokawa N."/>
            <person name="Hill D."/>
            <person name="Huminiecki L."/>
            <person name="Iacono M."/>
            <person name="Ikeo K."/>
            <person name="Iwama A."/>
            <person name="Ishikawa T."/>
            <person name="Jakt M."/>
            <person name="Kanapin A."/>
            <person name="Katoh M."/>
            <person name="Kawasawa Y."/>
            <person name="Kelso J."/>
            <person name="Kitamura H."/>
            <person name="Kitano H."/>
            <person name="Kollias G."/>
            <person name="Krishnan S.P."/>
            <person name="Kruger A."/>
            <person name="Kummerfeld S.K."/>
            <person name="Kurochkin I.V."/>
            <person name="Lareau L.F."/>
            <person name="Lazarevic D."/>
            <person name="Lipovich L."/>
            <person name="Liu J."/>
            <person name="Liuni S."/>
            <person name="McWilliam S."/>
            <person name="Madan Babu M."/>
            <person name="Madera M."/>
            <person name="Marchionni L."/>
            <person name="Matsuda H."/>
            <person name="Matsuzawa S."/>
            <person name="Miki H."/>
            <person name="Mignone F."/>
            <person name="Miyake S."/>
            <person name="Morris K."/>
            <person name="Mottagui-Tabar S."/>
            <person name="Mulder N."/>
            <person name="Nakano N."/>
            <person name="Nakauchi H."/>
            <person name="Ng P."/>
            <person name="Nilsson R."/>
            <person name="Nishiguchi S."/>
            <person name="Nishikawa S."/>
            <person name="Nori F."/>
            <person name="Ohara O."/>
            <person name="Okazaki Y."/>
            <person name="Orlando V."/>
            <person name="Pang K.C."/>
            <person name="Pavan W.J."/>
            <person name="Pavesi G."/>
            <person name="Pesole G."/>
            <person name="Petrovsky N."/>
            <person name="Piazza S."/>
            <person name="Reed J."/>
            <person name="Reid J.F."/>
            <person name="Ring B.Z."/>
            <person name="Ringwald M."/>
            <person name="Rost B."/>
            <person name="Ruan Y."/>
            <person name="Salzberg S.L."/>
            <person name="Sandelin A."/>
            <person name="Schneider C."/>
            <person name="Schoenbach C."/>
            <person name="Sekiguchi K."/>
            <person name="Semple C.A."/>
            <person name="Seno S."/>
            <person name="Sessa L."/>
            <person name="Sheng Y."/>
            <person name="Shibata Y."/>
            <person name="Shimada H."/>
            <person name="Shimada K."/>
            <person name="Silva D."/>
            <person name="Sinclair B."/>
            <person name="Sperling S."/>
            <person name="Stupka E."/>
            <person name="Sugiura K."/>
            <person name="Sultana R."/>
            <person name="Takenaka Y."/>
            <person name="Taki K."/>
            <person name="Tammoja K."/>
            <person name="Tan S.L."/>
            <person name="Tang S."/>
            <person name="Taylor M.S."/>
            <person name="Tegner J."/>
            <person name="Teichmann S.A."/>
            <person name="Ueda H.R."/>
            <person name="van Nimwegen E."/>
            <person name="Verardo R."/>
            <person name="Wei C.L."/>
            <person name="Yagi K."/>
            <person name="Yamanishi H."/>
            <person name="Zabarovsky E."/>
            <person name="Zhu S."/>
            <person name="Zimmer A."/>
            <person name="Hide W."/>
            <person name="Bult C."/>
            <person name="Grimmond S.M."/>
            <person name="Teasdale R.D."/>
            <person name="Liu E.T."/>
            <person name="Brusic V."/>
            <person name="Quackenbush J."/>
            <person name="Wahlestedt C."/>
            <person name="Mattick J.S."/>
            <person name="Hume D.A."/>
            <person name="Kai C."/>
            <person name="Sasaki D."/>
            <person name="Tomaru Y."/>
            <person name="Fukuda S."/>
            <person name="Kanamori-Katayama M."/>
            <person name="Suzuki M."/>
            <person name="Aoki J."/>
            <person name="Arakawa T."/>
            <person name="Iida J."/>
            <person name="Imamura K."/>
            <person name="Itoh M."/>
            <person name="Kato T."/>
            <person name="Kawaji H."/>
            <person name="Kawagashira N."/>
            <person name="Kawashima T."/>
            <person name="Kojima M."/>
            <person name="Kondo S."/>
            <person name="Konno H."/>
            <person name="Nakano K."/>
            <person name="Ninomiya N."/>
            <person name="Nishio T."/>
            <person name="Okada M."/>
            <person name="Plessy C."/>
            <person name="Shibata K."/>
            <person name="Shiraki T."/>
            <person name="Suzuki S."/>
            <person name="Tagami M."/>
            <person name="Waki K."/>
            <person name="Watahiki A."/>
            <person name="Okamura-Oho Y."/>
            <person name="Suzuki H."/>
            <person name="Kawai J."/>
            <person name="Hayashizaki Y."/>
        </authorList>
    </citation>
    <scope>NUCLEOTIDE SEQUENCE [LARGE SCALE MRNA]</scope>
    <source>
        <strain>C57BL/6J</strain>
        <tissue>Brain cortex</tissue>
        <tissue>Dendritic cell</tissue>
        <tissue>Embryonic heart</tissue>
        <tissue>Heart</tissue>
        <tissue>Macrophage</tissue>
        <tissue>Mammary gland</tissue>
        <tissue>Spleen</tissue>
    </source>
</reference>
<reference key="5">
    <citation type="journal article" date="2009" name="PLoS Biol.">
        <title>Lineage-specific biology revealed by a finished genome assembly of the mouse.</title>
        <authorList>
            <person name="Church D.M."/>
            <person name="Goodstadt L."/>
            <person name="Hillier L.W."/>
            <person name="Zody M.C."/>
            <person name="Goldstein S."/>
            <person name="She X."/>
            <person name="Bult C.J."/>
            <person name="Agarwala R."/>
            <person name="Cherry J.L."/>
            <person name="DiCuccio M."/>
            <person name="Hlavina W."/>
            <person name="Kapustin Y."/>
            <person name="Meric P."/>
            <person name="Maglott D."/>
            <person name="Birtle Z."/>
            <person name="Marques A.C."/>
            <person name="Graves T."/>
            <person name="Zhou S."/>
            <person name="Teague B."/>
            <person name="Potamousis K."/>
            <person name="Churas C."/>
            <person name="Place M."/>
            <person name="Herschleb J."/>
            <person name="Runnheim R."/>
            <person name="Forrest D."/>
            <person name="Amos-Landgraf J."/>
            <person name="Schwartz D.C."/>
            <person name="Cheng Z."/>
            <person name="Lindblad-Toh K."/>
            <person name="Eichler E.E."/>
            <person name="Ponting C.P."/>
        </authorList>
    </citation>
    <scope>NUCLEOTIDE SEQUENCE [LARGE SCALE GENOMIC DNA]</scope>
    <source>
        <strain>C57BL/6J</strain>
    </source>
</reference>
<reference key="6">
    <citation type="journal article" date="2004" name="Genome Res.">
        <title>The status, quality, and expansion of the NIH full-length cDNA project: the Mammalian Gene Collection (MGC).</title>
        <authorList>
            <consortium name="The MGC Project Team"/>
        </authorList>
    </citation>
    <scope>NUCLEOTIDE SEQUENCE [LARGE SCALE MRNA]</scope>
    <source>
        <strain>NMRI</strain>
        <tissue>Mammary tumor</tissue>
    </source>
</reference>
<reference key="7">
    <citation type="journal article" date="1996" name="J. Biol. Chem.">
        <title>Identification and characterization of a versatile retinoid response element (retinoic acid receptor response element-retinoid X receptor response element) in the mouse tissue transglutaminase gene promoter.</title>
        <authorList>
            <person name="Nagy L."/>
            <person name="Saydak M."/>
            <person name="Shipley N."/>
            <person name="Lu S."/>
            <person name="Basilion J.P."/>
            <person name="Yan Z.H."/>
            <person name="Syka P."/>
            <person name="Chandraratna R.A.S."/>
            <person name="Stein J.P."/>
            <person name="Heyman R.A."/>
            <person name="Davies P.J.A."/>
        </authorList>
    </citation>
    <scope>NUCLEOTIDE SEQUENCE [GENOMIC DNA] OF 1-3</scope>
    <source>
        <strain>SWR/J</strain>
    </source>
</reference>
<reference key="8">
    <citation type="submission" date="2008-02" db="UniProtKB">
        <authorList>
            <person name="Bienvenut W.V."/>
            <person name="Serrels B."/>
            <person name="Brunton V.G."/>
            <person name="Frame M.C."/>
        </authorList>
    </citation>
    <scope>PROTEIN SEQUENCE OF 2-19; 41-74; 158-173; 215-222; 290-327; 550-561; 564-589; 601-609; 634-648 AND 651-671</scope>
    <scope>CLEAVAGE OF INITIATOR METHIONINE</scope>
    <scope>ACETYLATION AT ALA-2</scope>
    <scope>IDENTIFICATION BY MASS SPECTROMETRY</scope>
    <source>
        <tissue>Embryonic fibroblast</tissue>
    </source>
</reference>
<reference key="9">
    <citation type="submission" date="2009-01" db="UniProtKB">
        <authorList>
            <person name="Lubec G."/>
            <person name="Sunyer B."/>
            <person name="Chen W.-Q."/>
        </authorList>
    </citation>
    <scope>PROTEIN SEQUENCE OF 378-387</scope>
    <scope>IDENTIFICATION BY MASS SPECTROMETRY</scope>
    <source>
        <strain>OF1</strain>
        <tissue>Hippocampus</tissue>
    </source>
</reference>
<reference key="10">
    <citation type="journal article" date="2001" name="J. Biol. Chem.">
        <title>Targeted inactivation of Gh/tissue transglutaminase II.</title>
        <authorList>
            <person name="Nanda N."/>
            <person name="Iismaa S.E."/>
            <person name="Owens W.A."/>
            <person name="Husain A."/>
            <person name="Mackay F."/>
            <person name="Graham R.M."/>
        </authorList>
    </citation>
    <scope>FUNCTION</scope>
    <scope>DISRUPTION PHENOTYPE</scope>
</reference>
<reference key="11">
    <citation type="journal article" date="2001" name="Mol. Cell. Biol.">
        <title>Gene disruption of tissue transglutaminase.</title>
        <authorList>
            <person name="De Laurenzi V."/>
            <person name="Melino G."/>
        </authorList>
    </citation>
    <scope>FUNCTION</scope>
    <scope>DISRUPTION PHENOTYPE</scope>
</reference>
<reference key="12">
    <citation type="journal article" date="2002" name="FASEB J.">
        <title>Role of transglutaminase 2 in glucose tolerance: knockout mice studies and a putative mutation in a MODY patient.</title>
        <authorList>
            <person name="Bernassola F."/>
            <person name="Federici M."/>
            <person name="Corazzari M."/>
            <person name="Terrinoni A."/>
            <person name="Hribal M.L."/>
            <person name="De Laurenzi V."/>
            <person name="Ranalli M."/>
            <person name="Massa O."/>
            <person name="Sesti G."/>
            <person name="McLean W.H."/>
            <person name="Citro G."/>
            <person name="Barbetti F."/>
            <person name="Melino G."/>
        </authorList>
    </citation>
    <scope>DISRUPTION PHENOTYPE</scope>
</reference>
<reference key="13">
    <citation type="journal article" date="2003" name="Proc. Natl. Acad. Sci. U.S.A.">
        <title>Transglutaminase 2-/- mice reveal a phagocytosis-associated crosstalk between macrophages and apoptotic cells.</title>
        <authorList>
            <person name="Szondy Z."/>
            <person name="Sarang Z."/>
            <person name="Molnar P."/>
            <person name="Nemeth T."/>
            <person name="Piacentini M."/>
            <person name="Mastroberardino P.G."/>
            <person name="Falasca L."/>
            <person name="Aeschlimann D."/>
            <person name="Kovacs J."/>
            <person name="Kiss I."/>
            <person name="Szegezdi E."/>
            <person name="Lakos G."/>
            <person name="Rajnavolgyi E."/>
            <person name="Birckbichler P.J."/>
            <person name="Melino G."/>
            <person name="Fesus L."/>
        </authorList>
    </citation>
    <scope>FUNCTION</scope>
    <scope>DISRUPTION PHENOTYPE</scope>
</reference>
<reference key="14">
    <citation type="journal article" date="2005" name="J. Immunol.">
        <title>Transglutaminase type II is a key element in the regulation of the anti-inflammatory response elicited by apoptotic cell engulfment.</title>
        <authorList>
            <person name="Falasca L."/>
            <person name="Iadevaia V."/>
            <person name="Ciccosanti F."/>
            <person name="Melino G."/>
            <person name="Serafino A."/>
            <person name="Piacentini M."/>
        </authorList>
    </citation>
    <scope>FUNCTION</scope>
    <scope>DISRUPTION PHENOTYPE</scope>
</reference>
<reference key="15">
    <citation type="journal article" date="2009" name="Cell Death Differ.">
        <title>The adenine nucleotide translocator 1 acts as a type 2 transglutaminase substrate: implications for mitochondrial-dependent apoptosis.</title>
        <authorList>
            <person name="Malorni W."/>
            <person name="Farrace M.G."/>
            <person name="Matarrese P."/>
            <person name="Tinari A."/>
            <person name="Ciarlo L."/>
            <person name="Mousavi-Shafaei P."/>
            <person name="D'Eletto M."/>
            <person name="Di Giacomo G."/>
            <person name="Melino G."/>
            <person name="Palmieri L."/>
            <person name="Rodolfo C."/>
            <person name="Piacentini M."/>
        </authorList>
    </citation>
    <scope>FUNCTION</scope>
    <scope>SUBCELLULAR LOCATION</scope>
</reference>
<reference key="16">
    <citation type="journal article" date="2010" name="Cell">
        <title>A tissue-specific atlas of mouse protein phosphorylation and expression.</title>
        <authorList>
            <person name="Huttlin E.L."/>
            <person name="Jedrychowski M.P."/>
            <person name="Elias J.E."/>
            <person name="Goswami T."/>
            <person name="Rad R."/>
            <person name="Beausoleil S.A."/>
            <person name="Villen J."/>
            <person name="Haas W."/>
            <person name="Sowa M.E."/>
            <person name="Gygi S.P."/>
        </authorList>
    </citation>
    <scope>IDENTIFICATION BY MASS SPECTROMETRY [LARGE SCALE ANALYSIS]</scope>
    <source>
        <tissue>Brain</tissue>
        <tissue>Brown adipose tissue</tissue>
        <tissue>Heart</tissue>
        <tissue>Kidney</tissue>
        <tissue>Liver</tissue>
        <tissue>Lung</tissue>
        <tissue>Pancreas</tissue>
        <tissue>Spleen</tissue>
        <tissue>Testis</tissue>
    </source>
</reference>
<reference key="17">
    <citation type="journal article" date="2010" name="Circ. Res.">
        <title>Decreased S-nitrosylation of tissue transglutaminase contributes to age-related increases in vascular stiffness.</title>
        <authorList>
            <person name="Santhanam L."/>
            <person name="Tuday E.C."/>
            <person name="Webb A.K."/>
            <person name="Dowzicky P."/>
            <person name="Kim J.H."/>
            <person name="Oh Y.J."/>
            <person name="Sikka G."/>
            <person name="Kuo M."/>
            <person name="Halushka M.K."/>
            <person name="Macgregor A.M."/>
            <person name="Dunn J."/>
            <person name="Gutbrod S."/>
            <person name="Yin D."/>
            <person name="Shoukas A."/>
            <person name="Nyhan D."/>
            <person name="Flavahan N.A."/>
            <person name="Belkin A.M."/>
            <person name="Berkowitz D.E."/>
        </authorList>
    </citation>
    <scope>FUNCTION</scope>
    <scope>S-NITROSYLATION</scope>
    <scope>SUBCELLULAR LOCATION</scope>
</reference>
<reference key="18">
    <citation type="journal article" date="2013" name="Mol. Cell">
        <title>SIRT5-mediated lysine desuccinylation impacts diverse metabolic pathways.</title>
        <authorList>
            <person name="Park J."/>
            <person name="Chen Y."/>
            <person name="Tishkoff D.X."/>
            <person name="Peng C."/>
            <person name="Tan M."/>
            <person name="Dai L."/>
            <person name="Xie Z."/>
            <person name="Zhang Y."/>
            <person name="Zwaans B.M."/>
            <person name="Skinner M.E."/>
            <person name="Lombard D.B."/>
            <person name="Zhao Y."/>
        </authorList>
    </citation>
    <scope>ACETYLATION [LARGE SCALE ANALYSIS] AT LYS-468</scope>
    <scope>IDENTIFICATION BY MASS SPECTROMETRY [LARGE SCALE ANALYSIS]</scope>
    <source>
        <tissue>Embryonic fibroblast</tissue>
    </source>
</reference>
<reference key="19">
    <citation type="journal article" date="2019" name="Front. Pharmacol.">
        <title>Role of TG2-mediated SERCA2 serotonylation on hypoxic pulmonary vein remodeling.</title>
        <authorList>
            <person name="Liu B."/>
            <person name="Wang D."/>
            <person name="Luo E."/>
            <person name="Hou J."/>
            <person name="Qiao Y."/>
            <person name="Yan G."/>
            <person name="Wang Q."/>
            <person name="Tang C."/>
        </authorList>
    </citation>
    <scope>FUNCTION</scope>
    <scope>CATALYTIC ACTIVITY</scope>
</reference>
<keyword id="KW-0007">Acetylation</keyword>
<keyword id="KW-0012">Acyltransferase</keyword>
<keyword id="KW-0106">Calcium</keyword>
<keyword id="KW-1003">Cell membrane</keyword>
<keyword id="KW-0158">Chromosome</keyword>
<keyword id="KW-0963">Cytoplasm</keyword>
<keyword id="KW-0903">Direct protein sequencing</keyword>
<keyword id="KW-1015">Disulfide bond</keyword>
<keyword id="KW-0272">Extracellular matrix</keyword>
<keyword id="KW-0342">GTP-binding</keyword>
<keyword id="KW-0378">Hydrolase</keyword>
<keyword id="KW-1017">Isopeptide bond</keyword>
<keyword id="KW-0472">Membrane</keyword>
<keyword id="KW-0479">Metal-binding</keyword>
<keyword id="KW-0496">Mitochondrion</keyword>
<keyword id="KW-0547">Nucleotide-binding</keyword>
<keyword id="KW-0539">Nucleus</keyword>
<keyword id="KW-0645">Protease</keyword>
<keyword id="KW-1185">Reference proteome</keyword>
<keyword id="KW-0702">S-nitrosylation</keyword>
<keyword id="KW-0964">Secreted</keyword>
<keyword id="KW-0808">Transferase</keyword>
<proteinExistence type="evidence at protein level"/>